<evidence type="ECO:0000255" key="1">
    <source>
        <dbReference type="HAMAP-Rule" id="MF_00012"/>
    </source>
</evidence>
<name>ILVD_CITBB</name>
<comment type="function">
    <text evidence="1">Functions in the biosynthesis of branched-chain amino acids. Catalyzes the dehydration of (2R,3R)-2,3-dihydroxy-3-methylpentanoate (2,3-dihydroxy-3-methylvalerate) into 2-oxo-3-methylpentanoate (2-oxo-3-methylvalerate) and of (2R)-2,3-dihydroxy-3-methylbutanoate (2,3-dihydroxyisovalerate) into 2-oxo-3-methylbutanoate (2-oxoisovalerate), the penultimate precursor to L-isoleucine and L-valine, respectively.</text>
</comment>
<comment type="catalytic activity">
    <reaction evidence="1">
        <text>(2R)-2,3-dihydroxy-3-methylbutanoate = 3-methyl-2-oxobutanoate + H2O</text>
        <dbReference type="Rhea" id="RHEA:24809"/>
        <dbReference type="ChEBI" id="CHEBI:11851"/>
        <dbReference type="ChEBI" id="CHEBI:15377"/>
        <dbReference type="ChEBI" id="CHEBI:49072"/>
        <dbReference type="EC" id="4.2.1.9"/>
    </reaction>
    <physiologicalReaction direction="left-to-right" evidence="1">
        <dbReference type="Rhea" id="RHEA:24810"/>
    </physiologicalReaction>
</comment>
<comment type="catalytic activity">
    <reaction evidence="1">
        <text>(2R,3R)-2,3-dihydroxy-3-methylpentanoate = (S)-3-methyl-2-oxopentanoate + H2O</text>
        <dbReference type="Rhea" id="RHEA:27694"/>
        <dbReference type="ChEBI" id="CHEBI:15377"/>
        <dbReference type="ChEBI" id="CHEBI:35146"/>
        <dbReference type="ChEBI" id="CHEBI:49258"/>
        <dbReference type="EC" id="4.2.1.9"/>
    </reaction>
    <physiologicalReaction direction="left-to-right" evidence="1">
        <dbReference type="Rhea" id="RHEA:27695"/>
    </physiologicalReaction>
</comment>
<comment type="cofactor">
    <cofactor evidence="1">
        <name>[2Fe-2S] cluster</name>
        <dbReference type="ChEBI" id="CHEBI:190135"/>
    </cofactor>
    <text evidence="1">Binds 1 [2Fe-2S] cluster per subunit. This cluster acts as a Lewis acid cofactor.</text>
</comment>
<comment type="cofactor">
    <cofactor evidence="1">
        <name>Mg(2+)</name>
        <dbReference type="ChEBI" id="CHEBI:18420"/>
    </cofactor>
</comment>
<comment type="pathway">
    <text evidence="1">Amino-acid biosynthesis; L-isoleucine biosynthesis; L-isoleucine from 2-oxobutanoate: step 3/4.</text>
</comment>
<comment type="pathway">
    <text evidence="1">Amino-acid biosynthesis; L-valine biosynthesis; L-valine from pyruvate: step 3/4.</text>
</comment>
<comment type="subunit">
    <text evidence="1">Homodimer.</text>
</comment>
<comment type="similarity">
    <text evidence="1">Belongs to the IlvD/Edd family.</text>
</comment>
<organism>
    <name type="scientific">Citrifermentans bemidjiense (strain ATCC BAA-1014 / DSM 16622 / JCM 12645 / Bem)</name>
    <name type="common">Geobacter bemidjiensis</name>
    <dbReference type="NCBI Taxonomy" id="404380"/>
    <lineage>
        <taxon>Bacteria</taxon>
        <taxon>Pseudomonadati</taxon>
        <taxon>Thermodesulfobacteriota</taxon>
        <taxon>Desulfuromonadia</taxon>
        <taxon>Geobacterales</taxon>
        <taxon>Geobacteraceae</taxon>
        <taxon>Citrifermentans</taxon>
    </lineage>
</organism>
<keyword id="KW-0001">2Fe-2S</keyword>
<keyword id="KW-0028">Amino-acid biosynthesis</keyword>
<keyword id="KW-0100">Branched-chain amino acid biosynthesis</keyword>
<keyword id="KW-0408">Iron</keyword>
<keyword id="KW-0411">Iron-sulfur</keyword>
<keyword id="KW-0456">Lyase</keyword>
<keyword id="KW-0460">Magnesium</keyword>
<keyword id="KW-0479">Metal-binding</keyword>
<keyword id="KW-1185">Reference proteome</keyword>
<proteinExistence type="inferred from homology"/>
<protein>
    <recommendedName>
        <fullName evidence="1">Dihydroxy-acid dehydratase</fullName>
        <shortName evidence="1">DAD</shortName>
        <ecNumber evidence="1">4.2.1.9</ecNumber>
    </recommendedName>
</protein>
<feature type="chain" id="PRO_1000089388" description="Dihydroxy-acid dehydratase">
    <location>
        <begin position="1"/>
        <end position="553"/>
    </location>
</feature>
<feature type="active site" description="Proton acceptor" evidence="1">
    <location>
        <position position="467"/>
    </location>
</feature>
<feature type="binding site" evidence="1">
    <location>
        <position position="78"/>
    </location>
    <ligand>
        <name>Mg(2+)</name>
        <dbReference type="ChEBI" id="CHEBI:18420"/>
    </ligand>
</feature>
<feature type="binding site" evidence="1">
    <location>
        <position position="119"/>
    </location>
    <ligand>
        <name>[2Fe-2S] cluster</name>
        <dbReference type="ChEBI" id="CHEBI:190135"/>
    </ligand>
</feature>
<feature type="binding site" evidence="1">
    <location>
        <position position="120"/>
    </location>
    <ligand>
        <name>Mg(2+)</name>
        <dbReference type="ChEBI" id="CHEBI:18420"/>
    </ligand>
</feature>
<feature type="binding site" description="via carbamate group" evidence="1">
    <location>
        <position position="121"/>
    </location>
    <ligand>
        <name>Mg(2+)</name>
        <dbReference type="ChEBI" id="CHEBI:18420"/>
    </ligand>
</feature>
<feature type="binding site" evidence="1">
    <location>
        <position position="193"/>
    </location>
    <ligand>
        <name>[2Fe-2S] cluster</name>
        <dbReference type="ChEBI" id="CHEBI:190135"/>
    </ligand>
</feature>
<feature type="binding site" evidence="1">
    <location>
        <position position="441"/>
    </location>
    <ligand>
        <name>Mg(2+)</name>
        <dbReference type="ChEBI" id="CHEBI:18420"/>
    </ligand>
</feature>
<feature type="modified residue" description="N6-carboxylysine" evidence="1">
    <location>
        <position position="121"/>
    </location>
</feature>
<reference key="1">
    <citation type="submission" date="2008-07" db="EMBL/GenBank/DDBJ databases">
        <title>Complete sequence of Geobacter bemidjiensis BEM.</title>
        <authorList>
            <consortium name="US DOE Joint Genome Institute"/>
            <person name="Lucas S."/>
            <person name="Copeland A."/>
            <person name="Lapidus A."/>
            <person name="Glavina del Rio T."/>
            <person name="Dalin E."/>
            <person name="Tice H."/>
            <person name="Bruce D."/>
            <person name="Goodwin L."/>
            <person name="Pitluck S."/>
            <person name="Kiss H."/>
            <person name="Brettin T."/>
            <person name="Detter J.C."/>
            <person name="Han C."/>
            <person name="Kuske C.R."/>
            <person name="Schmutz J."/>
            <person name="Larimer F."/>
            <person name="Land M."/>
            <person name="Hauser L."/>
            <person name="Kyrpides N."/>
            <person name="Lykidis A."/>
            <person name="Lovley D."/>
            <person name="Richardson P."/>
        </authorList>
    </citation>
    <scope>NUCLEOTIDE SEQUENCE [LARGE SCALE GENOMIC DNA]</scope>
    <source>
        <strain>ATCC BAA-1014 / DSM 16622 / JCM 12645 / Bem</strain>
    </source>
</reference>
<sequence length="553" mass="58340">MRSDTITQGLERTPHRALLKGTGLPQSEMGKPFIGIATSFTDLIPGHVGMRDLERFIEKGVHTGGGYSFFFGIPGVCDGISMGHKGMHYSLPTRELIADMVESVAEAHRLDGLVLLTNCDKITPGMLMAAARLDIPCIVVTAGPMMSGRGDAGRKYSFVTDTFEAMARYKAGVIDDAELARCEENACPGMGSCQGLFTANTMAILTETLGMSLPRCGTALAVSALKRRIAFASGERIVDLVRQNITPRSILTREAFENAIRVDLALGGSSNTVLHLLAIAHEAGVELPLETFDILAKETPQLASMNPAGEHFMEDLDVAGGVAGVLKQLGDKIHDCPTLMGLSTKEIAASLKGVDEEVIHPLSNPVKKEGGIAVLFGNICPKGAVVKQSGVSDKMMKFTGTARCFDSEDKAMAAMMGGVVKGGDVVVIRYEGPKGGPGMREMLAPTAALMGLGLGDSVALITDGRFSGGTRGPCIGHIAPEAAAGGPIGLIEDGDTIELDIPARSLKVMVSDEVLAERRARWVAPEPKIKKGWLARYAKVVTSAHTGAITTAE</sequence>
<dbReference type="EC" id="4.2.1.9" evidence="1"/>
<dbReference type="EMBL" id="CP001124">
    <property type="protein sequence ID" value="ACH39751.1"/>
    <property type="molecule type" value="Genomic_DNA"/>
</dbReference>
<dbReference type="RefSeq" id="WP_012531177.1">
    <property type="nucleotide sequence ID" value="NC_011146.1"/>
</dbReference>
<dbReference type="SMR" id="B5EHV2"/>
<dbReference type="STRING" id="404380.Gbem_2747"/>
<dbReference type="KEGG" id="gbm:Gbem_2747"/>
<dbReference type="eggNOG" id="COG0129">
    <property type="taxonomic scope" value="Bacteria"/>
</dbReference>
<dbReference type="HOGENOM" id="CLU_014271_4_2_7"/>
<dbReference type="OrthoDB" id="9807077at2"/>
<dbReference type="UniPathway" id="UPA00047">
    <property type="reaction ID" value="UER00057"/>
</dbReference>
<dbReference type="UniPathway" id="UPA00049">
    <property type="reaction ID" value="UER00061"/>
</dbReference>
<dbReference type="Proteomes" id="UP000008825">
    <property type="component" value="Chromosome"/>
</dbReference>
<dbReference type="GO" id="GO:0005829">
    <property type="term" value="C:cytosol"/>
    <property type="evidence" value="ECO:0007669"/>
    <property type="project" value="TreeGrafter"/>
</dbReference>
<dbReference type="GO" id="GO:0051537">
    <property type="term" value="F:2 iron, 2 sulfur cluster binding"/>
    <property type="evidence" value="ECO:0007669"/>
    <property type="project" value="UniProtKB-UniRule"/>
</dbReference>
<dbReference type="GO" id="GO:0004160">
    <property type="term" value="F:dihydroxy-acid dehydratase activity"/>
    <property type="evidence" value="ECO:0007669"/>
    <property type="project" value="UniProtKB-UniRule"/>
</dbReference>
<dbReference type="GO" id="GO:0000287">
    <property type="term" value="F:magnesium ion binding"/>
    <property type="evidence" value="ECO:0007669"/>
    <property type="project" value="UniProtKB-UniRule"/>
</dbReference>
<dbReference type="GO" id="GO:0009097">
    <property type="term" value="P:isoleucine biosynthetic process"/>
    <property type="evidence" value="ECO:0007669"/>
    <property type="project" value="UniProtKB-UniRule"/>
</dbReference>
<dbReference type="GO" id="GO:0009099">
    <property type="term" value="P:L-valine biosynthetic process"/>
    <property type="evidence" value="ECO:0007669"/>
    <property type="project" value="UniProtKB-UniRule"/>
</dbReference>
<dbReference type="FunFam" id="3.50.30.80:FF:000001">
    <property type="entry name" value="Dihydroxy-acid dehydratase"/>
    <property type="match status" value="1"/>
</dbReference>
<dbReference type="Gene3D" id="3.50.30.80">
    <property type="entry name" value="IlvD/EDD C-terminal domain-like"/>
    <property type="match status" value="1"/>
</dbReference>
<dbReference type="HAMAP" id="MF_00012">
    <property type="entry name" value="IlvD"/>
    <property type="match status" value="1"/>
</dbReference>
<dbReference type="InterPro" id="IPR042096">
    <property type="entry name" value="Dihydro-acid_dehy_C"/>
</dbReference>
<dbReference type="InterPro" id="IPR004404">
    <property type="entry name" value="DihydroxyA_deHydtase"/>
</dbReference>
<dbReference type="InterPro" id="IPR020558">
    <property type="entry name" value="DiOHA_6PGluconate_deHydtase_CS"/>
</dbReference>
<dbReference type="InterPro" id="IPR056740">
    <property type="entry name" value="ILV_EDD_C"/>
</dbReference>
<dbReference type="InterPro" id="IPR000581">
    <property type="entry name" value="ILV_EDD_N"/>
</dbReference>
<dbReference type="InterPro" id="IPR037237">
    <property type="entry name" value="IlvD/EDD_N"/>
</dbReference>
<dbReference type="NCBIfam" id="TIGR00110">
    <property type="entry name" value="ilvD"/>
    <property type="match status" value="1"/>
</dbReference>
<dbReference type="NCBIfam" id="NF002068">
    <property type="entry name" value="PRK00911.1"/>
    <property type="match status" value="1"/>
</dbReference>
<dbReference type="PANTHER" id="PTHR43661">
    <property type="entry name" value="D-XYLONATE DEHYDRATASE"/>
    <property type="match status" value="1"/>
</dbReference>
<dbReference type="PANTHER" id="PTHR43661:SF3">
    <property type="entry name" value="D-XYLONATE DEHYDRATASE YAGF-RELATED"/>
    <property type="match status" value="1"/>
</dbReference>
<dbReference type="Pfam" id="PF24877">
    <property type="entry name" value="ILV_EDD_C"/>
    <property type="match status" value="1"/>
</dbReference>
<dbReference type="Pfam" id="PF00920">
    <property type="entry name" value="ILVD_EDD_N"/>
    <property type="match status" value="1"/>
</dbReference>
<dbReference type="SUPFAM" id="SSF143975">
    <property type="entry name" value="IlvD/EDD N-terminal domain-like"/>
    <property type="match status" value="1"/>
</dbReference>
<dbReference type="SUPFAM" id="SSF52016">
    <property type="entry name" value="LeuD/IlvD-like"/>
    <property type="match status" value="1"/>
</dbReference>
<dbReference type="PROSITE" id="PS00886">
    <property type="entry name" value="ILVD_EDD_1"/>
    <property type="match status" value="1"/>
</dbReference>
<dbReference type="PROSITE" id="PS00887">
    <property type="entry name" value="ILVD_EDD_2"/>
    <property type="match status" value="1"/>
</dbReference>
<accession>B5EHV2</accession>
<gene>
    <name evidence="1" type="primary">ilvD</name>
    <name type="ordered locus">Gbem_2747</name>
</gene>